<evidence type="ECO:0000256" key="1">
    <source>
        <dbReference type="SAM" id="MobiDB-lite"/>
    </source>
</evidence>
<evidence type="ECO:0000305" key="2"/>
<reference key="1">
    <citation type="submission" date="2005-09" db="EMBL/GenBank/DDBJ databases">
        <title>Molecular characterization of the ribosomal protein S8 in the honey bee (Apis mellifera).</title>
        <authorList>
            <person name="Maleszka R."/>
            <person name="Kucharski R."/>
        </authorList>
    </citation>
    <scope>NUCLEOTIDE SEQUENCE [MRNA]</scope>
</reference>
<accession>O76756</accession>
<comment type="similarity">
    <text evidence="2">Belongs to the eukaryotic ribosomal protein eS8 family.</text>
</comment>
<sequence length="208" mass="23988">MGISRDHWHKRRATGGKRKPIRKKRKFELGRPAANTKLGPQRIHTVRTRGGNKKYRALRLDTGNFSWGSECTTRKTRIIDVVYNASNNELVRTKTLVKNAIVTIDATPFRQWYEGHYVLPLGRKRGAKLTEAEEEVLNKKRSKKAEAKYKARQRFAKVEPALEEQFATGRVLACISSRPGQCGREDGYILEGKELEFYMRRIKSKKAK</sequence>
<name>RS8_APIME</name>
<proteinExistence type="evidence at transcript level"/>
<gene>
    <name type="primary">RpS8</name>
</gene>
<protein>
    <recommendedName>
        <fullName evidence="2">Small ribosomal subunit protein eS8</fullName>
    </recommendedName>
    <alternativeName>
        <fullName>40S ribosomal protein S8</fullName>
    </alternativeName>
</protein>
<feature type="chain" id="PRO_0000122248" description="Small ribosomal subunit protein eS8">
    <location>
        <begin position="1"/>
        <end position="208"/>
    </location>
</feature>
<feature type="region of interest" description="Disordered" evidence="1">
    <location>
        <begin position="1"/>
        <end position="33"/>
    </location>
</feature>
<feature type="compositionally biased region" description="Basic residues" evidence="1">
    <location>
        <begin position="7"/>
        <end position="26"/>
    </location>
</feature>
<dbReference type="EMBL" id="AF080430">
    <property type="protein sequence ID" value="AAC28863.2"/>
    <property type="molecule type" value="mRNA"/>
</dbReference>
<dbReference type="RefSeq" id="NP_001011604.2">
    <property type="nucleotide sequence ID" value="NM_001011604.3"/>
</dbReference>
<dbReference type="SMR" id="O76756"/>
<dbReference type="FunCoup" id="O76756">
    <property type="interactions" value="1089"/>
</dbReference>
<dbReference type="STRING" id="7460.O76756"/>
<dbReference type="PaxDb" id="7460-GB42679-PA"/>
<dbReference type="EnsemblMetazoa" id="NM_001011604">
    <property type="protein sequence ID" value="NP_001011604"/>
    <property type="gene ID" value="GeneID_406126"/>
</dbReference>
<dbReference type="GeneID" id="406126"/>
<dbReference type="KEGG" id="ame:406126"/>
<dbReference type="CTD" id="6202"/>
<dbReference type="eggNOG" id="KOG3283">
    <property type="taxonomic scope" value="Eukaryota"/>
</dbReference>
<dbReference type="InParanoid" id="O76756"/>
<dbReference type="OrthoDB" id="1703270at2759"/>
<dbReference type="PhylomeDB" id="O76756"/>
<dbReference type="Proteomes" id="UP000005203">
    <property type="component" value="Linkage group LG9"/>
</dbReference>
<dbReference type="GO" id="GO:1990904">
    <property type="term" value="C:ribonucleoprotein complex"/>
    <property type="evidence" value="ECO:0007669"/>
    <property type="project" value="UniProtKB-KW"/>
</dbReference>
<dbReference type="GO" id="GO:0005840">
    <property type="term" value="C:ribosome"/>
    <property type="evidence" value="ECO:0007669"/>
    <property type="project" value="UniProtKB-KW"/>
</dbReference>
<dbReference type="GO" id="GO:0003735">
    <property type="term" value="F:structural constituent of ribosome"/>
    <property type="evidence" value="ECO:0007669"/>
    <property type="project" value="InterPro"/>
</dbReference>
<dbReference type="GO" id="GO:0006412">
    <property type="term" value="P:translation"/>
    <property type="evidence" value="ECO:0007669"/>
    <property type="project" value="InterPro"/>
</dbReference>
<dbReference type="CDD" id="cd11380">
    <property type="entry name" value="Ribosomal_S8e_like"/>
    <property type="match status" value="1"/>
</dbReference>
<dbReference type="FunFam" id="1.10.168.20:FF:000001">
    <property type="entry name" value="40S ribosomal protein S8"/>
    <property type="match status" value="1"/>
</dbReference>
<dbReference type="FunFam" id="3.10.290.70:FF:000004">
    <property type="entry name" value="40S ribosomal protein S8"/>
    <property type="match status" value="1"/>
</dbReference>
<dbReference type="Gene3D" id="3.10.290.70">
    <property type="match status" value="1"/>
</dbReference>
<dbReference type="Gene3D" id="1.10.168.20">
    <property type="entry name" value="Ribosomal protein S8e, subdomain"/>
    <property type="match status" value="1"/>
</dbReference>
<dbReference type="InterPro" id="IPR001047">
    <property type="entry name" value="Ribosomal_eS8"/>
</dbReference>
<dbReference type="InterPro" id="IPR018283">
    <property type="entry name" value="Ribosomal_eS8_CS"/>
</dbReference>
<dbReference type="InterPro" id="IPR042563">
    <property type="entry name" value="Ribosomal_protein_eS8_euk"/>
</dbReference>
<dbReference type="InterPro" id="IPR022309">
    <property type="entry name" value="Ribosomal_Se8/biogenesis_NSA2"/>
</dbReference>
<dbReference type="NCBIfam" id="TIGR00307">
    <property type="entry name" value="eS8"/>
    <property type="match status" value="1"/>
</dbReference>
<dbReference type="PANTHER" id="PTHR10394">
    <property type="entry name" value="40S RIBOSOMAL PROTEIN S8"/>
    <property type="match status" value="1"/>
</dbReference>
<dbReference type="Pfam" id="PF01201">
    <property type="entry name" value="Ribosomal_S8e"/>
    <property type="match status" value="1"/>
</dbReference>
<dbReference type="PROSITE" id="PS01193">
    <property type="entry name" value="RIBOSOMAL_S8E"/>
    <property type="match status" value="1"/>
</dbReference>
<keyword id="KW-1185">Reference proteome</keyword>
<keyword id="KW-0687">Ribonucleoprotein</keyword>
<keyword id="KW-0689">Ribosomal protein</keyword>
<organism>
    <name type="scientific">Apis mellifera</name>
    <name type="common">Honeybee</name>
    <dbReference type="NCBI Taxonomy" id="7460"/>
    <lineage>
        <taxon>Eukaryota</taxon>
        <taxon>Metazoa</taxon>
        <taxon>Ecdysozoa</taxon>
        <taxon>Arthropoda</taxon>
        <taxon>Hexapoda</taxon>
        <taxon>Insecta</taxon>
        <taxon>Pterygota</taxon>
        <taxon>Neoptera</taxon>
        <taxon>Endopterygota</taxon>
        <taxon>Hymenoptera</taxon>
        <taxon>Apocrita</taxon>
        <taxon>Aculeata</taxon>
        <taxon>Apoidea</taxon>
        <taxon>Anthophila</taxon>
        <taxon>Apidae</taxon>
        <taxon>Apis</taxon>
    </lineage>
</organism>